<accession>Q5VYS4</accession>
<accession>Q8IXF1</accession>
<accession>Q96K26</accession>
<accession>Q96NC8</accession>
<sequence length="303" mass="34190">MAGAACEPVARPSLTSISSGELRSLWTCDCELALLPLAQLLRLQPGAFQLSGDQLVVARPGEPAAARGGFNVFGDGLVRLDGQLYRLSSYIKRYVELTNYCDYKDYRETILSKPMLFFINVQTKKDTSKERTYAFLVNTRHPKIRRQIEQGMDMVISSVIGESYRLQFDFQEAVKNFFPPGNEVVNGENLSFAYEFKADALFDFFYWFGLSNSVVKVNGKVLNLSSTSPEKKETIKLFLEKMSEPLIRRSSFSDRKFSVTSRGSIDDVFNCNLSPRSSLTEPLLAELPFPSVLESEETPNQFI</sequence>
<comment type="function">
    <text evidence="1">Involved in processes that promote adipocyte differentiation, lipid accumulation, and glucose uptake in mature adipocytes.</text>
</comment>
<comment type="interaction">
    <interactant intactId="EBI-1050881">
        <id>Q5VYS4</id>
    </interactant>
    <interactant intactId="EBI-1166928">
        <id>Q8N5M1</id>
        <label>ATPAF2</label>
    </interactant>
    <organismsDiffer>false</organismsDiffer>
    <experiments>3</experiments>
</comment>
<comment type="interaction">
    <interactant intactId="EBI-1050881">
        <id>Q5VYS4</id>
    </interactant>
    <interactant intactId="EBI-10258233">
        <id>Q7Z7H3</id>
        <label>CATIP</label>
    </interactant>
    <organismsDiffer>false</organismsDiffer>
    <experiments>3</experiments>
</comment>
<comment type="interaction">
    <interactant intactId="EBI-1050881">
        <id>Q5VYS4</id>
    </interactant>
    <interactant intactId="EBI-1049004">
        <id>P57105</id>
        <label>SYNJ2BP</label>
    </interactant>
    <organismsDiffer>false</organismsDiffer>
    <experiments>3</experiments>
</comment>
<comment type="interaction">
    <interactant intactId="EBI-1050881">
        <id>Q5VYS4</id>
    </interactant>
    <interactant intactId="EBI-74615">
        <id>Q9H0E2</id>
        <label>TOLLIP</label>
    </interactant>
    <organismsDiffer>false</organismsDiffer>
    <experiments>3</experiments>
</comment>
<comment type="subcellular location">
    <subcellularLocation>
        <location evidence="4">Cytoplasm</location>
    </subcellularLocation>
</comment>
<comment type="alternative products">
    <event type="alternative splicing"/>
    <isoform>
        <id>Q5VYS4-1</id>
        <name>1</name>
        <sequence type="displayed"/>
    </isoform>
    <isoform>
        <id>Q5VYS4-2</id>
        <name>2</name>
        <sequence type="described" ref="VSP_022714 VSP_022715"/>
    </isoform>
</comment>
<comment type="tissue specificity">
    <text evidence="4">Highly expressed in the visceral fat depot.</text>
</comment>
<evidence type="ECO:0000250" key="1"/>
<evidence type="ECO:0000269" key="2">
    <source>
    </source>
</evidence>
<evidence type="ECO:0000269" key="3">
    <source>
    </source>
</evidence>
<evidence type="ECO:0000269" key="4">
    <source>
    </source>
</evidence>
<evidence type="ECO:0000303" key="5">
    <source>
    </source>
</evidence>
<name>MEDAG_HUMAN</name>
<reference key="1">
    <citation type="journal article" date="2004" name="Nat. Genet.">
        <title>Complete sequencing and characterization of 21,243 full-length human cDNAs.</title>
        <authorList>
            <person name="Ota T."/>
            <person name="Suzuki Y."/>
            <person name="Nishikawa T."/>
            <person name="Otsuki T."/>
            <person name="Sugiyama T."/>
            <person name="Irie R."/>
            <person name="Wakamatsu A."/>
            <person name="Hayashi K."/>
            <person name="Sato H."/>
            <person name="Nagai K."/>
            <person name="Kimura K."/>
            <person name="Makita H."/>
            <person name="Sekine M."/>
            <person name="Obayashi M."/>
            <person name="Nishi T."/>
            <person name="Shibahara T."/>
            <person name="Tanaka T."/>
            <person name="Ishii S."/>
            <person name="Yamamoto J."/>
            <person name="Saito K."/>
            <person name="Kawai Y."/>
            <person name="Isono Y."/>
            <person name="Nakamura Y."/>
            <person name="Nagahari K."/>
            <person name="Murakami K."/>
            <person name="Yasuda T."/>
            <person name="Iwayanagi T."/>
            <person name="Wagatsuma M."/>
            <person name="Shiratori A."/>
            <person name="Sudo H."/>
            <person name="Hosoiri T."/>
            <person name="Kaku Y."/>
            <person name="Kodaira H."/>
            <person name="Kondo H."/>
            <person name="Sugawara M."/>
            <person name="Takahashi M."/>
            <person name="Kanda K."/>
            <person name="Yokoi T."/>
            <person name="Furuya T."/>
            <person name="Kikkawa E."/>
            <person name="Omura Y."/>
            <person name="Abe K."/>
            <person name="Kamihara K."/>
            <person name="Katsuta N."/>
            <person name="Sato K."/>
            <person name="Tanikawa M."/>
            <person name="Yamazaki M."/>
            <person name="Ninomiya K."/>
            <person name="Ishibashi T."/>
            <person name="Yamashita H."/>
            <person name="Murakawa K."/>
            <person name="Fujimori K."/>
            <person name="Tanai H."/>
            <person name="Kimata M."/>
            <person name="Watanabe M."/>
            <person name="Hiraoka S."/>
            <person name="Chiba Y."/>
            <person name="Ishida S."/>
            <person name="Ono Y."/>
            <person name="Takiguchi S."/>
            <person name="Watanabe S."/>
            <person name="Yosida M."/>
            <person name="Hotuta T."/>
            <person name="Kusano J."/>
            <person name="Kanehori K."/>
            <person name="Takahashi-Fujii A."/>
            <person name="Hara H."/>
            <person name="Tanase T.-O."/>
            <person name="Nomura Y."/>
            <person name="Togiya S."/>
            <person name="Komai F."/>
            <person name="Hara R."/>
            <person name="Takeuchi K."/>
            <person name="Arita M."/>
            <person name="Imose N."/>
            <person name="Musashino K."/>
            <person name="Yuuki H."/>
            <person name="Oshima A."/>
            <person name="Sasaki N."/>
            <person name="Aotsuka S."/>
            <person name="Yoshikawa Y."/>
            <person name="Matsunawa H."/>
            <person name="Ichihara T."/>
            <person name="Shiohata N."/>
            <person name="Sano S."/>
            <person name="Moriya S."/>
            <person name="Momiyama H."/>
            <person name="Satoh N."/>
            <person name="Takami S."/>
            <person name="Terashima Y."/>
            <person name="Suzuki O."/>
            <person name="Nakagawa S."/>
            <person name="Senoh A."/>
            <person name="Mizoguchi H."/>
            <person name="Goto Y."/>
            <person name="Shimizu F."/>
            <person name="Wakebe H."/>
            <person name="Hishigaki H."/>
            <person name="Watanabe T."/>
            <person name="Sugiyama A."/>
            <person name="Takemoto M."/>
            <person name="Kawakami B."/>
            <person name="Yamazaki M."/>
            <person name="Watanabe K."/>
            <person name="Kumagai A."/>
            <person name="Itakura S."/>
            <person name="Fukuzumi Y."/>
            <person name="Fujimori Y."/>
            <person name="Komiyama M."/>
            <person name="Tashiro H."/>
            <person name="Tanigami A."/>
            <person name="Fujiwara T."/>
            <person name="Ono T."/>
            <person name="Yamada K."/>
            <person name="Fujii Y."/>
            <person name="Ozaki K."/>
            <person name="Hirao M."/>
            <person name="Ohmori Y."/>
            <person name="Kawabata A."/>
            <person name="Hikiji T."/>
            <person name="Kobatake N."/>
            <person name="Inagaki H."/>
            <person name="Ikema Y."/>
            <person name="Okamoto S."/>
            <person name="Okitani R."/>
            <person name="Kawakami T."/>
            <person name="Noguchi S."/>
            <person name="Itoh T."/>
            <person name="Shigeta K."/>
            <person name="Senba T."/>
            <person name="Matsumura K."/>
            <person name="Nakajima Y."/>
            <person name="Mizuno T."/>
            <person name="Morinaga M."/>
            <person name="Sasaki M."/>
            <person name="Togashi T."/>
            <person name="Oyama M."/>
            <person name="Hata H."/>
            <person name="Watanabe M."/>
            <person name="Komatsu T."/>
            <person name="Mizushima-Sugano J."/>
            <person name="Satoh T."/>
            <person name="Shirai Y."/>
            <person name="Takahashi Y."/>
            <person name="Nakagawa K."/>
            <person name="Okumura K."/>
            <person name="Nagase T."/>
            <person name="Nomura N."/>
            <person name="Kikuchi H."/>
            <person name="Masuho Y."/>
            <person name="Yamashita R."/>
            <person name="Nakai K."/>
            <person name="Yada T."/>
            <person name="Nakamura Y."/>
            <person name="Ohara O."/>
            <person name="Isogai T."/>
            <person name="Sugano S."/>
        </authorList>
    </citation>
    <scope>NUCLEOTIDE SEQUENCE [LARGE SCALE MRNA] (ISOFORMS 1 AND 2)</scope>
    <scope>VARIANT GLY-59</scope>
    <source>
        <tissue>Ovary</tissue>
        <tissue>Synovial cell</tissue>
    </source>
</reference>
<reference key="2">
    <citation type="journal article" date="2004" name="Nature">
        <title>The DNA sequence and analysis of human chromosome 13.</title>
        <authorList>
            <person name="Dunham A."/>
            <person name="Matthews L.H."/>
            <person name="Burton J."/>
            <person name="Ashurst J.L."/>
            <person name="Howe K.L."/>
            <person name="Ashcroft K.J."/>
            <person name="Beare D.M."/>
            <person name="Burford D.C."/>
            <person name="Hunt S.E."/>
            <person name="Griffiths-Jones S."/>
            <person name="Jones M.C."/>
            <person name="Keenan S.J."/>
            <person name="Oliver K."/>
            <person name="Scott C.E."/>
            <person name="Ainscough R."/>
            <person name="Almeida J.P."/>
            <person name="Ambrose K.D."/>
            <person name="Andrews D.T."/>
            <person name="Ashwell R.I.S."/>
            <person name="Babbage A.K."/>
            <person name="Bagguley C.L."/>
            <person name="Bailey J."/>
            <person name="Bannerjee R."/>
            <person name="Barlow K.F."/>
            <person name="Bates K."/>
            <person name="Beasley H."/>
            <person name="Bird C.P."/>
            <person name="Bray-Allen S."/>
            <person name="Brown A.J."/>
            <person name="Brown J.Y."/>
            <person name="Burrill W."/>
            <person name="Carder C."/>
            <person name="Carter N.P."/>
            <person name="Chapman J.C."/>
            <person name="Clamp M.E."/>
            <person name="Clark S.Y."/>
            <person name="Clarke G."/>
            <person name="Clee C.M."/>
            <person name="Clegg S.C."/>
            <person name="Cobley V."/>
            <person name="Collins J.E."/>
            <person name="Corby N."/>
            <person name="Coville G.J."/>
            <person name="Deloukas P."/>
            <person name="Dhami P."/>
            <person name="Dunham I."/>
            <person name="Dunn M."/>
            <person name="Earthrowl M.E."/>
            <person name="Ellington A.G."/>
            <person name="Faulkner L."/>
            <person name="Frankish A.G."/>
            <person name="Frankland J."/>
            <person name="French L."/>
            <person name="Garner P."/>
            <person name="Garnett J."/>
            <person name="Gilbert J.G.R."/>
            <person name="Gilson C.J."/>
            <person name="Ghori J."/>
            <person name="Grafham D.V."/>
            <person name="Gribble S.M."/>
            <person name="Griffiths C."/>
            <person name="Hall R.E."/>
            <person name="Hammond S."/>
            <person name="Harley J.L."/>
            <person name="Hart E.A."/>
            <person name="Heath P.D."/>
            <person name="Howden P.J."/>
            <person name="Huckle E.J."/>
            <person name="Hunt P.J."/>
            <person name="Hunt A.R."/>
            <person name="Johnson C."/>
            <person name="Johnson D."/>
            <person name="Kay M."/>
            <person name="Kimberley A.M."/>
            <person name="King A."/>
            <person name="Laird G.K."/>
            <person name="Langford C.J."/>
            <person name="Lawlor S."/>
            <person name="Leongamornlert D.A."/>
            <person name="Lloyd D.M."/>
            <person name="Lloyd C."/>
            <person name="Loveland J.E."/>
            <person name="Lovell J."/>
            <person name="Martin S."/>
            <person name="Mashreghi-Mohammadi M."/>
            <person name="McLaren S.J."/>
            <person name="McMurray A."/>
            <person name="Milne S."/>
            <person name="Moore M.J.F."/>
            <person name="Nickerson T."/>
            <person name="Palmer S.A."/>
            <person name="Pearce A.V."/>
            <person name="Peck A.I."/>
            <person name="Pelan S."/>
            <person name="Phillimore B."/>
            <person name="Porter K.M."/>
            <person name="Rice C.M."/>
            <person name="Searle S."/>
            <person name="Sehra H.K."/>
            <person name="Shownkeen R."/>
            <person name="Skuce C.D."/>
            <person name="Smith M."/>
            <person name="Steward C.A."/>
            <person name="Sycamore N."/>
            <person name="Tester J."/>
            <person name="Thomas D.W."/>
            <person name="Tracey A."/>
            <person name="Tromans A."/>
            <person name="Tubby B."/>
            <person name="Wall M."/>
            <person name="Wallis J.M."/>
            <person name="West A.P."/>
            <person name="Whitehead S.L."/>
            <person name="Willey D.L."/>
            <person name="Wilming L."/>
            <person name="Wray P.W."/>
            <person name="Wright M.W."/>
            <person name="Young L."/>
            <person name="Coulson A."/>
            <person name="Durbin R.M."/>
            <person name="Hubbard T."/>
            <person name="Sulston J.E."/>
            <person name="Beck S."/>
            <person name="Bentley D.R."/>
            <person name="Rogers J."/>
            <person name="Ross M.T."/>
        </authorList>
    </citation>
    <scope>NUCLEOTIDE SEQUENCE [LARGE SCALE GENOMIC DNA]</scope>
</reference>
<reference key="3">
    <citation type="journal article" date="2004" name="Genome Res.">
        <title>The status, quality, and expansion of the NIH full-length cDNA project: the Mammalian Gene Collection (MGC).</title>
        <authorList>
            <consortium name="The MGC Project Team"/>
        </authorList>
    </citation>
    <scope>NUCLEOTIDE SEQUENCE [LARGE SCALE MRNA] (ISOFORM 1)</scope>
    <scope>VARIANT GLY-59</scope>
    <source>
        <tissue>Heart</tissue>
        <tissue>Lung</tissue>
        <tissue>Ovary</tissue>
    </source>
</reference>
<reference key="4">
    <citation type="submission" date="2001-02" db="EMBL/GenBank/DDBJ databases">
        <title>Isolation and characterization of novel human and mouse genes, which are expressed in the digestive tract.</title>
        <authorList>
            <person name="Daigo Y."/>
            <person name="Takayama I."/>
            <person name="Fujino M.A."/>
        </authorList>
    </citation>
    <scope>NUCLEOTIDE SEQUENCE [MRNA] OF 92-303 (ISOFORM 1)</scope>
</reference>
<reference key="5">
    <citation type="journal article" date="2012" name="Endocrinology">
        <title>Novel genes of visceral adiposity: identification of mouse and human mesenteric estrogen-dependent adipose (MEDA)-4 gene and its adipogenic function.</title>
        <authorList>
            <person name="Zhang H."/>
            <person name="Chen X."/>
            <person name="Sairam M.R."/>
        </authorList>
    </citation>
    <scope>TISSUE SPECIFICITY</scope>
    <scope>SUBCELLULAR LOCATION</scope>
</reference>
<protein>
    <recommendedName>
        <fullName>Mesenteric estrogen-dependent adipogenesis protein</fullName>
    </recommendedName>
    <alternativeName>
        <fullName>Activated in W/Wv mouse stomach 3 homolog</fullName>
        <shortName>hAWMS3</shortName>
    </alternativeName>
    <alternativeName>
        <fullName>Mesenteric estrogen-dependent adipose 4</fullName>
        <shortName>MEDA-4</shortName>
    </alternativeName>
</protein>
<gene>
    <name type="primary">MEDAG</name>
    <name type="synonym">AWMS3</name>
    <name type="synonym">C13orf33</name>
    <name type="synonym">MEDA4</name>
</gene>
<organism>
    <name type="scientific">Homo sapiens</name>
    <name type="common">Human</name>
    <dbReference type="NCBI Taxonomy" id="9606"/>
    <lineage>
        <taxon>Eukaryota</taxon>
        <taxon>Metazoa</taxon>
        <taxon>Chordata</taxon>
        <taxon>Craniata</taxon>
        <taxon>Vertebrata</taxon>
        <taxon>Euteleostomi</taxon>
        <taxon>Mammalia</taxon>
        <taxon>Eutheria</taxon>
        <taxon>Euarchontoglires</taxon>
        <taxon>Primates</taxon>
        <taxon>Haplorrhini</taxon>
        <taxon>Catarrhini</taxon>
        <taxon>Hominidae</taxon>
        <taxon>Homo</taxon>
    </lineage>
</organism>
<proteinExistence type="evidence at protein level"/>
<feature type="chain" id="PRO_0000274333" description="Mesenteric estrogen-dependent adipogenesis protein">
    <location>
        <begin position="1"/>
        <end position="303"/>
    </location>
</feature>
<feature type="splice variant" id="VSP_022714" description="In isoform 2." evidence="5">
    <location>
        <begin position="1"/>
        <end position="114"/>
    </location>
</feature>
<feature type="splice variant" id="VSP_022715" description="In isoform 2." evidence="5">
    <original>NLSSTSPEKKETIKLFLEKMSEPLIRRSSFSDRKFSVTSR</original>
    <variation>L</variation>
    <location>
        <begin position="223"/>
        <end position="262"/>
    </location>
</feature>
<feature type="sequence variant" id="VAR_030261" description="In dbSNP:rs9531945." evidence="2 3">
    <original>R</original>
    <variation>G</variation>
    <location>
        <position position="59"/>
    </location>
</feature>
<keyword id="KW-0025">Alternative splicing</keyword>
<keyword id="KW-0963">Cytoplasm</keyword>
<keyword id="KW-1267">Proteomics identification</keyword>
<keyword id="KW-1185">Reference proteome</keyword>
<dbReference type="EMBL" id="AK027740">
    <property type="status" value="NOT_ANNOTATED_CDS"/>
    <property type="molecule type" value="mRNA"/>
</dbReference>
<dbReference type="EMBL" id="AK055635">
    <property type="protein sequence ID" value="BAB70975.1"/>
    <property type="molecule type" value="mRNA"/>
</dbReference>
<dbReference type="EMBL" id="AL353680">
    <property type="status" value="NOT_ANNOTATED_CDS"/>
    <property type="molecule type" value="Genomic_DNA"/>
</dbReference>
<dbReference type="EMBL" id="BC040165">
    <property type="protein sequence ID" value="AAH40165.1"/>
    <property type="molecule type" value="mRNA"/>
</dbReference>
<dbReference type="EMBL" id="BC101624">
    <property type="protein sequence ID" value="AAI01625.1"/>
    <property type="molecule type" value="mRNA"/>
</dbReference>
<dbReference type="EMBL" id="BC101626">
    <property type="protein sequence ID" value="AAI01627.1"/>
    <property type="molecule type" value="mRNA"/>
</dbReference>
<dbReference type="EMBL" id="AB055407">
    <property type="protein sequence ID" value="BAC53805.1"/>
    <property type="molecule type" value="mRNA"/>
</dbReference>
<dbReference type="CCDS" id="CCDS9338.1">
    <molecule id="Q5VYS4-1"/>
</dbReference>
<dbReference type="RefSeq" id="NP_116238.2">
    <molecule id="Q5VYS4-1"/>
    <property type="nucleotide sequence ID" value="NM_032849.3"/>
</dbReference>
<dbReference type="BioGRID" id="124369">
    <property type="interactions" value="6"/>
</dbReference>
<dbReference type="FunCoup" id="Q5VYS4">
    <property type="interactions" value="208"/>
</dbReference>
<dbReference type="IntAct" id="Q5VYS4">
    <property type="interactions" value="5"/>
</dbReference>
<dbReference type="STRING" id="9606.ENSP00000369849"/>
<dbReference type="iPTMnet" id="Q5VYS4"/>
<dbReference type="PhosphoSitePlus" id="Q5VYS4"/>
<dbReference type="BioMuta" id="MEDAG"/>
<dbReference type="MassIVE" id="Q5VYS4"/>
<dbReference type="PaxDb" id="9606-ENSP00000369849"/>
<dbReference type="PeptideAtlas" id="Q5VYS4"/>
<dbReference type="ProteomicsDB" id="65640">
    <molecule id="Q5VYS4-1"/>
</dbReference>
<dbReference type="ProteomicsDB" id="65641">
    <molecule id="Q5VYS4-2"/>
</dbReference>
<dbReference type="Antibodypedia" id="53455">
    <property type="antibodies" value="18 antibodies from 9 providers"/>
</dbReference>
<dbReference type="DNASU" id="84935"/>
<dbReference type="Ensembl" id="ENST00000380482.9">
    <molecule id="Q5VYS4-1"/>
    <property type="protein sequence ID" value="ENSP00000369849.4"/>
    <property type="gene ID" value="ENSG00000102802.10"/>
</dbReference>
<dbReference type="GeneID" id="84935"/>
<dbReference type="KEGG" id="hsa:84935"/>
<dbReference type="MANE-Select" id="ENST00000380482.9">
    <property type="protein sequence ID" value="ENSP00000369849.4"/>
    <property type="RefSeq nucleotide sequence ID" value="NM_032849.4"/>
    <property type="RefSeq protein sequence ID" value="NP_116238.3"/>
</dbReference>
<dbReference type="UCSC" id="uc001uth.5">
    <molecule id="Q5VYS4-1"/>
    <property type="organism name" value="human"/>
</dbReference>
<dbReference type="AGR" id="HGNC:25926"/>
<dbReference type="CTD" id="84935"/>
<dbReference type="DisGeNET" id="84935"/>
<dbReference type="GeneCards" id="MEDAG"/>
<dbReference type="HGNC" id="HGNC:25926">
    <property type="gene designation" value="MEDAG"/>
</dbReference>
<dbReference type="HPA" id="ENSG00000102802">
    <property type="expression patterns" value="Tissue enhanced (adipose)"/>
</dbReference>
<dbReference type="neXtProt" id="NX_Q5VYS4"/>
<dbReference type="OpenTargets" id="ENSG00000102802"/>
<dbReference type="PharmGKB" id="PA147358556"/>
<dbReference type="VEuPathDB" id="HostDB:ENSG00000102802"/>
<dbReference type="eggNOG" id="ENOG502REG3">
    <property type="taxonomic scope" value="Eukaryota"/>
</dbReference>
<dbReference type="GeneTree" id="ENSGT00390000018451"/>
<dbReference type="HOGENOM" id="CLU_080194_0_0_1"/>
<dbReference type="InParanoid" id="Q5VYS4"/>
<dbReference type="OMA" id="MAVWSGS"/>
<dbReference type="OrthoDB" id="10008580at2759"/>
<dbReference type="PAN-GO" id="Q5VYS4">
    <property type="GO annotations" value="1 GO annotation based on evolutionary models"/>
</dbReference>
<dbReference type="PhylomeDB" id="Q5VYS4"/>
<dbReference type="TreeFam" id="TF328824"/>
<dbReference type="PathwayCommons" id="Q5VYS4"/>
<dbReference type="SignaLink" id="Q5VYS4"/>
<dbReference type="BioGRID-ORCS" id="84935">
    <property type="hits" value="16 hits in 1145 CRISPR screens"/>
</dbReference>
<dbReference type="ChiTaRS" id="MEDAG">
    <property type="organism name" value="human"/>
</dbReference>
<dbReference type="GenomeRNAi" id="84935"/>
<dbReference type="Pharos" id="Q5VYS4">
    <property type="development level" value="Tdark"/>
</dbReference>
<dbReference type="PRO" id="PR:Q5VYS4"/>
<dbReference type="Proteomes" id="UP000005640">
    <property type="component" value="Chromosome 13"/>
</dbReference>
<dbReference type="RNAct" id="Q5VYS4">
    <property type="molecule type" value="protein"/>
</dbReference>
<dbReference type="Bgee" id="ENSG00000102802">
    <property type="expression patterns" value="Expressed in calcaneal tendon and 149 other cell types or tissues"/>
</dbReference>
<dbReference type="ExpressionAtlas" id="Q5VYS4">
    <property type="expression patterns" value="baseline and differential"/>
</dbReference>
<dbReference type="GO" id="GO:0005737">
    <property type="term" value="C:cytoplasm"/>
    <property type="evidence" value="ECO:0000314"/>
    <property type="project" value="UniProtKB"/>
</dbReference>
<dbReference type="GO" id="GO:0045600">
    <property type="term" value="P:positive regulation of fat cell differentiation"/>
    <property type="evidence" value="ECO:0000250"/>
    <property type="project" value="UniProtKB"/>
</dbReference>
<dbReference type="InterPro" id="IPR043460">
    <property type="entry name" value="MEDAG/TEX26"/>
</dbReference>
<dbReference type="PANTHER" id="PTHR33769:SF3">
    <property type="entry name" value="MESENTERIC ESTROGEN-DEPENDENT ADIPOGENESIS PROTEIN"/>
    <property type="match status" value="1"/>
</dbReference>
<dbReference type="PANTHER" id="PTHR33769">
    <property type="entry name" value="TESTIS-EXPRESSED PROTEIN 26 ISOFORM X3"/>
    <property type="match status" value="1"/>
</dbReference>